<feature type="chain" id="PRO_1000063983" description="2,3-bisphosphoglycerate-independent phosphoglycerate mutase">
    <location>
        <begin position="1"/>
        <end position="507"/>
    </location>
</feature>
<feature type="active site" description="Phosphoserine intermediate" evidence="1">
    <location>
        <position position="63"/>
    </location>
</feature>
<feature type="binding site" evidence="1">
    <location>
        <position position="13"/>
    </location>
    <ligand>
        <name>Mn(2+)</name>
        <dbReference type="ChEBI" id="CHEBI:29035"/>
        <label>2</label>
    </ligand>
</feature>
<feature type="binding site" evidence="1">
    <location>
        <position position="63"/>
    </location>
    <ligand>
        <name>Mn(2+)</name>
        <dbReference type="ChEBI" id="CHEBI:29035"/>
        <label>2</label>
    </ligand>
</feature>
<feature type="binding site" evidence="1">
    <location>
        <position position="124"/>
    </location>
    <ligand>
        <name>substrate</name>
    </ligand>
</feature>
<feature type="binding site" evidence="1">
    <location>
        <begin position="153"/>
        <end position="154"/>
    </location>
    <ligand>
        <name>substrate</name>
    </ligand>
</feature>
<feature type="binding site" evidence="1">
    <location>
        <position position="183"/>
    </location>
    <ligand>
        <name>substrate</name>
    </ligand>
</feature>
<feature type="binding site" evidence="1">
    <location>
        <position position="189"/>
    </location>
    <ligand>
        <name>substrate</name>
    </ligand>
</feature>
<feature type="binding site" evidence="1">
    <location>
        <begin position="254"/>
        <end position="257"/>
    </location>
    <ligand>
        <name>substrate</name>
    </ligand>
</feature>
<feature type="binding site" evidence="1">
    <location>
        <position position="330"/>
    </location>
    <ligand>
        <name>substrate</name>
    </ligand>
</feature>
<feature type="binding site" evidence="1">
    <location>
        <position position="396"/>
    </location>
    <ligand>
        <name>Mn(2+)</name>
        <dbReference type="ChEBI" id="CHEBI:29035"/>
        <label>1</label>
    </ligand>
</feature>
<feature type="binding site" evidence="1">
    <location>
        <position position="400"/>
    </location>
    <ligand>
        <name>Mn(2+)</name>
        <dbReference type="ChEBI" id="CHEBI:29035"/>
        <label>1</label>
    </ligand>
</feature>
<feature type="binding site" evidence="1">
    <location>
        <position position="437"/>
    </location>
    <ligand>
        <name>Mn(2+)</name>
        <dbReference type="ChEBI" id="CHEBI:29035"/>
        <label>2</label>
    </ligand>
</feature>
<feature type="binding site" evidence="1">
    <location>
        <position position="438"/>
    </location>
    <ligand>
        <name>Mn(2+)</name>
        <dbReference type="ChEBI" id="CHEBI:29035"/>
        <label>2</label>
    </ligand>
</feature>
<feature type="binding site" evidence="1">
    <location>
        <position position="456"/>
    </location>
    <ligand>
        <name>Mn(2+)</name>
        <dbReference type="ChEBI" id="CHEBI:29035"/>
        <label>1</label>
    </ligand>
</feature>
<sequence length="507" mass="53836">MTRPKPVVLCILDGWGISSRPEQSAPDQARTPNFDRLMRGCPHGTLVTFGPDVGLPKGQMGNSEVGHTNIGAGRVVAMDLGQIDLAIEDGSFYENAALGEFIRKLKASGGTAHLMGVVSDGGVHGHIQHVIAAARAVTDKGVPVVIHVVTDGRDVPPQSAMGFVTELLGELPEAARIGTVVGRYYAMDRDNRWERVARAYAAMVRAEGLPAPDAAQAVADAYARGETDEFIQPTVVEGYAGAKDGDGFFCLNFRADRAREILAAIGQPDFSAFDTGRRPEWAALLGMVDYSTSHDEYMQAAYPKRQVVNTLGAWVAARGLRQFRLAETEKYPHVTFFLNGGKETPEEGEDRFMPASPKVATYDLAPEMAAPEVSAKLVEAIEAGYDLIVVNYANPDMVGHTGSLPAAIRACEAVDKGLGMMLEALEKAGGAAVVIADHGNCETTIDPETGGPHTAHTTNPVPVIVFGGPEGAKLRNGRLADVAPTVLDLMGLDLPPEMTGTSLIGRA</sequence>
<organism>
    <name type="scientific">Paracoccus denitrificans (strain Pd 1222)</name>
    <dbReference type="NCBI Taxonomy" id="318586"/>
    <lineage>
        <taxon>Bacteria</taxon>
        <taxon>Pseudomonadati</taxon>
        <taxon>Pseudomonadota</taxon>
        <taxon>Alphaproteobacteria</taxon>
        <taxon>Rhodobacterales</taxon>
        <taxon>Paracoccaceae</taxon>
        <taxon>Paracoccus</taxon>
    </lineage>
</organism>
<accession>A1B4Z9</accession>
<comment type="function">
    <text evidence="1">Catalyzes the interconversion of 2-phosphoglycerate and 3-phosphoglycerate.</text>
</comment>
<comment type="catalytic activity">
    <reaction evidence="1">
        <text>(2R)-2-phosphoglycerate = (2R)-3-phosphoglycerate</text>
        <dbReference type="Rhea" id="RHEA:15901"/>
        <dbReference type="ChEBI" id="CHEBI:58272"/>
        <dbReference type="ChEBI" id="CHEBI:58289"/>
        <dbReference type="EC" id="5.4.2.12"/>
    </reaction>
</comment>
<comment type="cofactor">
    <cofactor evidence="1">
        <name>Mn(2+)</name>
        <dbReference type="ChEBI" id="CHEBI:29035"/>
    </cofactor>
    <text evidence="1">Binds 2 manganese ions per subunit.</text>
</comment>
<comment type="pathway">
    <text evidence="1">Carbohydrate degradation; glycolysis; pyruvate from D-glyceraldehyde 3-phosphate: step 3/5.</text>
</comment>
<comment type="subunit">
    <text evidence="1">Monomer.</text>
</comment>
<comment type="similarity">
    <text evidence="1">Belongs to the BPG-independent phosphoglycerate mutase family.</text>
</comment>
<dbReference type="EC" id="5.4.2.12" evidence="1"/>
<dbReference type="EMBL" id="CP000489">
    <property type="protein sequence ID" value="ABL70593.1"/>
    <property type="molecule type" value="Genomic_DNA"/>
</dbReference>
<dbReference type="RefSeq" id="WP_011748786.1">
    <property type="nucleotide sequence ID" value="NC_008686.1"/>
</dbReference>
<dbReference type="SMR" id="A1B4Z9"/>
<dbReference type="STRING" id="318586.Pden_2506"/>
<dbReference type="EnsemblBacteria" id="ABL70593">
    <property type="protein sequence ID" value="ABL70593"/>
    <property type="gene ID" value="Pden_2506"/>
</dbReference>
<dbReference type="GeneID" id="93450899"/>
<dbReference type="KEGG" id="pde:Pden_2506"/>
<dbReference type="eggNOG" id="COG0696">
    <property type="taxonomic scope" value="Bacteria"/>
</dbReference>
<dbReference type="HOGENOM" id="CLU_026099_2_0_5"/>
<dbReference type="OrthoDB" id="9800863at2"/>
<dbReference type="UniPathway" id="UPA00109">
    <property type="reaction ID" value="UER00186"/>
</dbReference>
<dbReference type="Proteomes" id="UP000000361">
    <property type="component" value="Chromosome 1"/>
</dbReference>
<dbReference type="GO" id="GO:0005829">
    <property type="term" value="C:cytosol"/>
    <property type="evidence" value="ECO:0007669"/>
    <property type="project" value="TreeGrafter"/>
</dbReference>
<dbReference type="GO" id="GO:0030145">
    <property type="term" value="F:manganese ion binding"/>
    <property type="evidence" value="ECO:0007669"/>
    <property type="project" value="UniProtKB-UniRule"/>
</dbReference>
<dbReference type="GO" id="GO:0004619">
    <property type="term" value="F:phosphoglycerate mutase activity"/>
    <property type="evidence" value="ECO:0007669"/>
    <property type="project" value="UniProtKB-EC"/>
</dbReference>
<dbReference type="GO" id="GO:0006007">
    <property type="term" value="P:glucose catabolic process"/>
    <property type="evidence" value="ECO:0007669"/>
    <property type="project" value="InterPro"/>
</dbReference>
<dbReference type="GO" id="GO:0006096">
    <property type="term" value="P:glycolytic process"/>
    <property type="evidence" value="ECO:0007669"/>
    <property type="project" value="UniProtKB-UniRule"/>
</dbReference>
<dbReference type="CDD" id="cd16010">
    <property type="entry name" value="iPGM"/>
    <property type="match status" value="1"/>
</dbReference>
<dbReference type="FunFam" id="3.40.1450.10:FF:000002">
    <property type="entry name" value="2,3-bisphosphoglycerate-independent phosphoglycerate mutase"/>
    <property type="match status" value="1"/>
</dbReference>
<dbReference type="Gene3D" id="3.40.720.10">
    <property type="entry name" value="Alkaline Phosphatase, subunit A"/>
    <property type="match status" value="1"/>
</dbReference>
<dbReference type="Gene3D" id="3.40.1450.10">
    <property type="entry name" value="BPG-independent phosphoglycerate mutase, domain B"/>
    <property type="match status" value="1"/>
</dbReference>
<dbReference type="HAMAP" id="MF_01038">
    <property type="entry name" value="GpmI"/>
    <property type="match status" value="1"/>
</dbReference>
<dbReference type="InterPro" id="IPR017850">
    <property type="entry name" value="Alkaline_phosphatase_core_sf"/>
</dbReference>
<dbReference type="InterPro" id="IPR011258">
    <property type="entry name" value="BPG-indep_PGM_N"/>
</dbReference>
<dbReference type="InterPro" id="IPR006124">
    <property type="entry name" value="Metalloenzyme"/>
</dbReference>
<dbReference type="InterPro" id="IPR036646">
    <property type="entry name" value="PGAM_B_sf"/>
</dbReference>
<dbReference type="InterPro" id="IPR005995">
    <property type="entry name" value="Pgm_bpd_ind"/>
</dbReference>
<dbReference type="NCBIfam" id="TIGR01307">
    <property type="entry name" value="pgm_bpd_ind"/>
    <property type="match status" value="1"/>
</dbReference>
<dbReference type="PANTHER" id="PTHR31637">
    <property type="entry name" value="2,3-BISPHOSPHOGLYCERATE-INDEPENDENT PHOSPHOGLYCERATE MUTASE"/>
    <property type="match status" value="1"/>
</dbReference>
<dbReference type="PANTHER" id="PTHR31637:SF0">
    <property type="entry name" value="2,3-BISPHOSPHOGLYCERATE-INDEPENDENT PHOSPHOGLYCERATE MUTASE"/>
    <property type="match status" value="1"/>
</dbReference>
<dbReference type="Pfam" id="PF06415">
    <property type="entry name" value="iPGM_N"/>
    <property type="match status" value="1"/>
</dbReference>
<dbReference type="Pfam" id="PF01676">
    <property type="entry name" value="Metalloenzyme"/>
    <property type="match status" value="1"/>
</dbReference>
<dbReference type="PIRSF" id="PIRSF001492">
    <property type="entry name" value="IPGAM"/>
    <property type="match status" value="1"/>
</dbReference>
<dbReference type="SUPFAM" id="SSF64158">
    <property type="entry name" value="2,3-Bisphosphoglycerate-independent phosphoglycerate mutase, substrate-binding domain"/>
    <property type="match status" value="1"/>
</dbReference>
<dbReference type="SUPFAM" id="SSF53649">
    <property type="entry name" value="Alkaline phosphatase-like"/>
    <property type="match status" value="1"/>
</dbReference>
<name>GPMI_PARDP</name>
<protein>
    <recommendedName>
        <fullName evidence="1">2,3-bisphosphoglycerate-independent phosphoglycerate mutase</fullName>
        <shortName evidence="1">BPG-independent PGAM</shortName>
        <shortName evidence="1">Phosphoglyceromutase</shortName>
        <shortName evidence="1">iPGM</shortName>
        <ecNumber evidence="1">5.4.2.12</ecNumber>
    </recommendedName>
</protein>
<gene>
    <name evidence="1" type="primary">gpmI</name>
    <name type="ordered locus">Pden_2506</name>
</gene>
<keyword id="KW-0324">Glycolysis</keyword>
<keyword id="KW-0413">Isomerase</keyword>
<keyword id="KW-0464">Manganese</keyword>
<keyword id="KW-0479">Metal-binding</keyword>
<keyword id="KW-1185">Reference proteome</keyword>
<proteinExistence type="inferred from homology"/>
<evidence type="ECO:0000255" key="1">
    <source>
        <dbReference type="HAMAP-Rule" id="MF_01038"/>
    </source>
</evidence>
<reference key="1">
    <citation type="submission" date="2006-12" db="EMBL/GenBank/DDBJ databases">
        <title>Complete sequence of chromosome 1 of Paracoccus denitrificans PD1222.</title>
        <authorList>
            <person name="Copeland A."/>
            <person name="Lucas S."/>
            <person name="Lapidus A."/>
            <person name="Barry K."/>
            <person name="Detter J.C."/>
            <person name="Glavina del Rio T."/>
            <person name="Hammon N."/>
            <person name="Israni S."/>
            <person name="Dalin E."/>
            <person name="Tice H."/>
            <person name="Pitluck S."/>
            <person name="Munk A.C."/>
            <person name="Brettin T."/>
            <person name="Bruce D."/>
            <person name="Han C."/>
            <person name="Tapia R."/>
            <person name="Gilna P."/>
            <person name="Schmutz J."/>
            <person name="Larimer F."/>
            <person name="Land M."/>
            <person name="Hauser L."/>
            <person name="Kyrpides N."/>
            <person name="Lykidis A."/>
            <person name="Spiro S."/>
            <person name="Richardson D.J."/>
            <person name="Moir J.W.B."/>
            <person name="Ferguson S.J."/>
            <person name="van Spanning R.J.M."/>
            <person name="Richardson P."/>
        </authorList>
    </citation>
    <scope>NUCLEOTIDE SEQUENCE [LARGE SCALE GENOMIC DNA]</scope>
    <source>
        <strain>Pd 1222</strain>
    </source>
</reference>